<feature type="chain" id="PRO_0000348915" description="Trehalose-6-phosphate synthase">
    <location>
        <begin position="1"/>
        <end position="473"/>
    </location>
</feature>
<feature type="binding site" evidence="1">
    <location>
        <position position="10"/>
    </location>
    <ligand>
        <name>D-glucose 6-phosphate</name>
        <dbReference type="ChEBI" id="CHEBI:61548"/>
    </ligand>
</feature>
<feature type="binding site" evidence="1">
    <location>
        <begin position="21"/>
        <end position="22"/>
    </location>
    <ligand>
        <name>UDP-alpha-D-glucose</name>
        <dbReference type="ChEBI" id="CHEBI:58885"/>
    </ligand>
</feature>
<feature type="binding site" evidence="1">
    <location>
        <position position="76"/>
    </location>
    <ligand>
        <name>D-glucose 6-phosphate</name>
        <dbReference type="ChEBI" id="CHEBI:61548"/>
    </ligand>
</feature>
<feature type="binding site" evidence="1">
    <location>
        <position position="130"/>
    </location>
    <ligand>
        <name>D-glucose 6-phosphate</name>
        <dbReference type="ChEBI" id="CHEBI:61548"/>
    </ligand>
</feature>
<feature type="binding site" evidence="1">
    <location>
        <position position="262"/>
    </location>
    <ligand>
        <name>UDP-alpha-D-glucose</name>
        <dbReference type="ChEBI" id="CHEBI:58885"/>
    </ligand>
</feature>
<feature type="binding site" evidence="1">
    <location>
        <position position="267"/>
    </location>
    <ligand>
        <name>UDP-alpha-D-glucose</name>
        <dbReference type="ChEBI" id="CHEBI:58885"/>
    </ligand>
</feature>
<feature type="binding site" evidence="1">
    <location>
        <position position="300"/>
    </location>
    <ligand>
        <name>D-glucose 6-phosphate</name>
        <dbReference type="ChEBI" id="CHEBI:61548"/>
    </ligand>
</feature>
<feature type="binding site" evidence="1">
    <location>
        <position position="339"/>
    </location>
    <ligand>
        <name>UDP-alpha-D-glucose</name>
        <dbReference type="ChEBI" id="CHEBI:58885"/>
    </ligand>
</feature>
<feature type="binding site" evidence="1">
    <location>
        <begin position="365"/>
        <end position="369"/>
    </location>
    <ligand>
        <name>UDP-alpha-D-glucose</name>
        <dbReference type="ChEBI" id="CHEBI:58885"/>
    </ligand>
</feature>
<feature type="site" description="Involved in alpha anomer selectivity" evidence="1">
    <location>
        <position position="85"/>
    </location>
</feature>
<feature type="site" description="Involved in alpha anomer selectivity" evidence="1">
    <location>
        <position position="155"/>
    </location>
</feature>
<keyword id="KW-0328">Glycosyltransferase</keyword>
<keyword id="KW-1185">Reference proteome</keyword>
<keyword id="KW-0808">Transferase</keyword>
<sequence>MSRLVVVSNRIAPPDNKGGAGGLAVGVLGALKAAGGLWFGWSGETGNEDEPLKKVTKGNITWASFNLSEQDYEDYYCQFSNAVLWPAFHYRLDLVQFQRPAWEGYMRVNALLADKLLPLIKENDIIWVHDYHLLPFASELRKRGVNNRIGFFLHIPFPTPEIFNALPPHDELLEQLCDFDLLGFQTENDRLAFLDSLSSQTRVTTRSGKHHIAWGKDFQTEVYPIGIEPDEIALQAAGPLPPKLVQLKAELKNVKNIFSVERLDYSKGLPERFLAYEALLENYPQHRGKIRYTQIAPTSRGEVQAYQDIRHQLETEAGRINGRYGQLGWTPLYYLNQHFDRKLLMKIFRYSDVGLVTPLRDGMNLVAKEFVAAQDPANPGVLVLSQFAGAANELTSALIVNPYDRDDVAAALNRALTMPLAERISRHAEMLDVIVKNDINRWQERFIHDLKEVTPRSAERRQQNNVATFPKLA</sequence>
<comment type="function">
    <text evidence="1">Probably involved in the osmoprotection via the biosynthesis of trehalose. Catalyzes the transfer of glucose from UDP-alpha-D-glucose (UDP-Glc) to D-glucose 6-phosphate (Glc-6-P) to form trehalose-6-phosphate. Acts with retention of the anomeric configuration of the UDP-sugar donor.</text>
</comment>
<comment type="catalytic activity">
    <reaction evidence="1">
        <text>D-glucose 6-phosphate + UDP-alpha-D-glucose = alpha,alpha-trehalose 6-phosphate + UDP + H(+)</text>
        <dbReference type="Rhea" id="RHEA:18889"/>
        <dbReference type="ChEBI" id="CHEBI:15378"/>
        <dbReference type="ChEBI" id="CHEBI:58223"/>
        <dbReference type="ChEBI" id="CHEBI:58429"/>
        <dbReference type="ChEBI" id="CHEBI:58885"/>
        <dbReference type="ChEBI" id="CHEBI:61548"/>
        <dbReference type="EC" id="2.4.1.15"/>
    </reaction>
</comment>
<comment type="pathway">
    <text evidence="1">Glycan biosynthesis; trehalose biosynthesis.</text>
</comment>
<comment type="subunit">
    <text evidence="1">Homotetramer.</text>
</comment>
<comment type="similarity">
    <text evidence="1">Belongs to the glycosyltransferase 20 family.</text>
</comment>
<comment type="sequence caution" evidence="2">
    <conflict type="erroneous initiation">
        <sequence resource="EMBL-CDS" id="ABX20921"/>
    </conflict>
</comment>
<protein>
    <recommendedName>
        <fullName evidence="1">Trehalose-6-phosphate synthase</fullName>
        <shortName evidence="1">TPS</shortName>
        <ecNumber evidence="1">2.4.1.15</ecNumber>
    </recommendedName>
    <alternativeName>
        <fullName evidence="1">Alpha,alpha-trehalose-phosphate synthase [UDP-forming]</fullName>
    </alternativeName>
    <alternativeName>
        <fullName evidence="1">Osmoregulatory trehalose synthesis protein A</fullName>
        <shortName evidence="1">OtsA</shortName>
    </alternativeName>
    <alternativeName>
        <fullName evidence="1">UDP-glucose-glucosephosphate glucosyltransferase</fullName>
    </alternativeName>
</protein>
<reference key="1">
    <citation type="submission" date="2007-11" db="EMBL/GenBank/DDBJ databases">
        <authorList>
            <consortium name="The Salmonella enterica serovar Arizonae Genome Sequencing Project"/>
            <person name="McClelland M."/>
            <person name="Sanderson E.K."/>
            <person name="Porwollik S."/>
            <person name="Spieth J."/>
            <person name="Clifton W.S."/>
            <person name="Fulton R."/>
            <person name="Chunyan W."/>
            <person name="Wollam A."/>
            <person name="Shah N."/>
            <person name="Pepin K."/>
            <person name="Bhonagiri V."/>
            <person name="Nash W."/>
            <person name="Johnson M."/>
            <person name="Thiruvilangam P."/>
            <person name="Wilson R."/>
        </authorList>
    </citation>
    <scope>NUCLEOTIDE SEQUENCE [LARGE SCALE GENOMIC DNA]</scope>
    <source>
        <strain>ATCC BAA-731 / CDC346-86 / RSK2980</strain>
    </source>
</reference>
<organism>
    <name type="scientific">Salmonella arizonae (strain ATCC BAA-731 / CDC346-86 / RSK2980)</name>
    <dbReference type="NCBI Taxonomy" id="41514"/>
    <lineage>
        <taxon>Bacteria</taxon>
        <taxon>Pseudomonadati</taxon>
        <taxon>Pseudomonadota</taxon>
        <taxon>Gammaproteobacteria</taxon>
        <taxon>Enterobacterales</taxon>
        <taxon>Enterobacteriaceae</taxon>
        <taxon>Salmonella</taxon>
    </lineage>
</organism>
<gene>
    <name type="primary">otsA</name>
    <name type="ordered locus">SARI_01013</name>
</gene>
<accession>A9MMQ2</accession>
<evidence type="ECO:0000250" key="1">
    <source>
        <dbReference type="UniProtKB" id="P31677"/>
    </source>
</evidence>
<evidence type="ECO:0000305" key="2"/>
<dbReference type="EC" id="2.4.1.15" evidence="1"/>
<dbReference type="EMBL" id="CP000880">
    <property type="protein sequence ID" value="ABX20921.1"/>
    <property type="status" value="ALT_INIT"/>
    <property type="molecule type" value="Genomic_DNA"/>
</dbReference>
<dbReference type="SMR" id="A9MMQ2"/>
<dbReference type="STRING" id="41514.SARI_01013"/>
<dbReference type="CAZy" id="GT20">
    <property type="family name" value="Glycosyltransferase Family 20"/>
</dbReference>
<dbReference type="KEGG" id="ses:SARI_01013"/>
<dbReference type="HOGENOM" id="CLU_002351_7_1_6"/>
<dbReference type="UniPathway" id="UPA00299"/>
<dbReference type="Proteomes" id="UP000002084">
    <property type="component" value="Chromosome"/>
</dbReference>
<dbReference type="GO" id="GO:0003825">
    <property type="term" value="F:alpha,alpha-trehalose-phosphate synthase (UDP-forming) activity"/>
    <property type="evidence" value="ECO:0007669"/>
    <property type="project" value="UniProtKB-EC"/>
</dbReference>
<dbReference type="GO" id="GO:0005992">
    <property type="term" value="P:trehalose biosynthetic process"/>
    <property type="evidence" value="ECO:0007669"/>
    <property type="project" value="UniProtKB-UniPathway"/>
</dbReference>
<dbReference type="CDD" id="cd03788">
    <property type="entry name" value="GT20_TPS"/>
    <property type="match status" value="1"/>
</dbReference>
<dbReference type="FunFam" id="3.40.50.2000:FF:000024">
    <property type="entry name" value="Trehalose-6-phosphate synthase"/>
    <property type="match status" value="1"/>
</dbReference>
<dbReference type="Gene3D" id="3.40.50.2000">
    <property type="entry name" value="Glycogen Phosphorylase B"/>
    <property type="match status" value="2"/>
</dbReference>
<dbReference type="InterPro" id="IPR001830">
    <property type="entry name" value="Glyco_trans_20"/>
</dbReference>
<dbReference type="InterPro" id="IPR012766">
    <property type="entry name" value="Trehalose_OtsA"/>
</dbReference>
<dbReference type="NCBIfam" id="NF007513">
    <property type="entry name" value="PRK10117.1"/>
    <property type="match status" value="1"/>
</dbReference>
<dbReference type="NCBIfam" id="TIGR02400">
    <property type="entry name" value="trehalose_OtsA"/>
    <property type="match status" value="1"/>
</dbReference>
<dbReference type="PANTHER" id="PTHR10788:SF106">
    <property type="entry name" value="BCDNA.GH08860"/>
    <property type="match status" value="1"/>
</dbReference>
<dbReference type="PANTHER" id="PTHR10788">
    <property type="entry name" value="TREHALOSE-6-PHOSPHATE SYNTHASE"/>
    <property type="match status" value="1"/>
</dbReference>
<dbReference type="Pfam" id="PF00982">
    <property type="entry name" value="Glyco_transf_20"/>
    <property type="match status" value="1"/>
</dbReference>
<dbReference type="SUPFAM" id="SSF53756">
    <property type="entry name" value="UDP-Glycosyltransferase/glycogen phosphorylase"/>
    <property type="match status" value="1"/>
</dbReference>
<proteinExistence type="inferred from homology"/>
<name>OTSA_SALAR</name>